<reference key="1">
    <citation type="journal article" date="2005" name="Nat. Biotechnol.">
        <title>The genome sequence of the ethanologenic bacterium Zymomonas mobilis ZM4.</title>
        <authorList>
            <person name="Seo J.-S."/>
            <person name="Chong H."/>
            <person name="Park H.S."/>
            <person name="Yoon K.-O."/>
            <person name="Jung C."/>
            <person name="Kim J.J."/>
            <person name="Hong J.H."/>
            <person name="Kim H."/>
            <person name="Kim J.-H."/>
            <person name="Kil J.-I."/>
            <person name="Park C.J."/>
            <person name="Oh H.-M."/>
            <person name="Lee J.-S."/>
            <person name="Jin S.-J."/>
            <person name="Um H.-W."/>
            <person name="Lee H.-J."/>
            <person name="Oh S.-J."/>
            <person name="Kim J.Y."/>
            <person name="Kang H.L."/>
            <person name="Lee S.Y."/>
            <person name="Lee K.J."/>
            <person name="Kang H.S."/>
        </authorList>
    </citation>
    <scope>NUCLEOTIDE SEQUENCE [LARGE SCALE GENOMIC DNA]</scope>
    <source>
        <strain>ATCC 31821 / ZM4 / CP4</strain>
    </source>
</reference>
<dbReference type="EC" id="2.1.3.15" evidence="1"/>
<dbReference type="EMBL" id="AE008692">
    <property type="protein sequence ID" value="AAV89223.1"/>
    <property type="molecule type" value="Genomic_DNA"/>
</dbReference>
<dbReference type="RefSeq" id="WP_011240501.1">
    <property type="nucleotide sequence ID" value="NZ_CP035711.1"/>
</dbReference>
<dbReference type="SMR" id="Q5NPY2"/>
<dbReference type="STRING" id="264203.ZMO0599"/>
<dbReference type="KEGG" id="zmo:ZMO0599"/>
<dbReference type="eggNOG" id="COG0825">
    <property type="taxonomic scope" value="Bacteria"/>
</dbReference>
<dbReference type="HOGENOM" id="CLU_015486_0_2_5"/>
<dbReference type="UniPathway" id="UPA00655">
    <property type="reaction ID" value="UER00711"/>
</dbReference>
<dbReference type="Proteomes" id="UP000001173">
    <property type="component" value="Chromosome"/>
</dbReference>
<dbReference type="GO" id="GO:0009317">
    <property type="term" value="C:acetyl-CoA carboxylase complex"/>
    <property type="evidence" value="ECO:0007669"/>
    <property type="project" value="InterPro"/>
</dbReference>
<dbReference type="GO" id="GO:0003989">
    <property type="term" value="F:acetyl-CoA carboxylase activity"/>
    <property type="evidence" value="ECO:0007669"/>
    <property type="project" value="InterPro"/>
</dbReference>
<dbReference type="GO" id="GO:0005524">
    <property type="term" value="F:ATP binding"/>
    <property type="evidence" value="ECO:0007669"/>
    <property type="project" value="UniProtKB-KW"/>
</dbReference>
<dbReference type="GO" id="GO:0016743">
    <property type="term" value="F:carboxyl- or carbamoyltransferase activity"/>
    <property type="evidence" value="ECO:0007669"/>
    <property type="project" value="UniProtKB-UniRule"/>
</dbReference>
<dbReference type="GO" id="GO:0006633">
    <property type="term" value="P:fatty acid biosynthetic process"/>
    <property type="evidence" value="ECO:0007669"/>
    <property type="project" value="UniProtKB-KW"/>
</dbReference>
<dbReference type="GO" id="GO:2001295">
    <property type="term" value="P:malonyl-CoA biosynthetic process"/>
    <property type="evidence" value="ECO:0007669"/>
    <property type="project" value="UniProtKB-UniRule"/>
</dbReference>
<dbReference type="Gene3D" id="3.90.226.10">
    <property type="entry name" value="2-enoyl-CoA Hydratase, Chain A, domain 1"/>
    <property type="match status" value="1"/>
</dbReference>
<dbReference type="HAMAP" id="MF_00823">
    <property type="entry name" value="AcetylCoA_CT_alpha"/>
    <property type="match status" value="1"/>
</dbReference>
<dbReference type="InterPro" id="IPR001095">
    <property type="entry name" value="Acetyl_CoA_COase_a_su"/>
</dbReference>
<dbReference type="InterPro" id="IPR029045">
    <property type="entry name" value="ClpP/crotonase-like_dom_sf"/>
</dbReference>
<dbReference type="InterPro" id="IPR011763">
    <property type="entry name" value="COA_CT_C"/>
</dbReference>
<dbReference type="NCBIfam" id="TIGR00513">
    <property type="entry name" value="accA"/>
    <property type="match status" value="1"/>
</dbReference>
<dbReference type="NCBIfam" id="NF041504">
    <property type="entry name" value="AccA_sub"/>
    <property type="match status" value="1"/>
</dbReference>
<dbReference type="NCBIfam" id="NF004344">
    <property type="entry name" value="PRK05724.1"/>
    <property type="match status" value="1"/>
</dbReference>
<dbReference type="PANTHER" id="PTHR42853">
    <property type="entry name" value="ACETYL-COENZYME A CARBOXYLASE CARBOXYL TRANSFERASE SUBUNIT ALPHA"/>
    <property type="match status" value="1"/>
</dbReference>
<dbReference type="PANTHER" id="PTHR42853:SF3">
    <property type="entry name" value="ACETYL-COENZYME A CARBOXYLASE CARBOXYL TRANSFERASE SUBUNIT ALPHA, CHLOROPLASTIC"/>
    <property type="match status" value="1"/>
</dbReference>
<dbReference type="Pfam" id="PF03255">
    <property type="entry name" value="ACCA"/>
    <property type="match status" value="1"/>
</dbReference>
<dbReference type="PRINTS" id="PR01069">
    <property type="entry name" value="ACCCTRFRASEA"/>
</dbReference>
<dbReference type="SUPFAM" id="SSF52096">
    <property type="entry name" value="ClpP/crotonase"/>
    <property type="match status" value="1"/>
</dbReference>
<dbReference type="PROSITE" id="PS50989">
    <property type="entry name" value="COA_CT_CTER"/>
    <property type="match status" value="1"/>
</dbReference>
<protein>
    <recommendedName>
        <fullName evidence="1">Acetyl-coenzyme A carboxylase carboxyl transferase subunit alpha</fullName>
        <shortName evidence="1">ACCase subunit alpha</shortName>
        <shortName evidence="1">Acetyl-CoA carboxylase carboxyltransferase subunit alpha</shortName>
        <ecNumber evidence="1">2.1.3.15</ecNumber>
    </recommendedName>
</protein>
<sequence>MVSYLDFEKPVAELQTRIAELRKATSDEMDLDREISDLEVKVQKLLRDTYAHLTPWQKTQVARHPERPHFHDYISALCEEFIPLAGDRLFGEDEAIIGGLARIDGQRVMIIGQEKGNDTASRLKHNFGMARPEGYRKAIRLMKLADRFGLPVITLVDTSGAFPGIDAEERGQAEAIARSTETCLSLGVPLISVIVGEGGSGGAIAIAAANRLLMFEHAVYSVISPEGCASILWRDAGKASDAATAMKLTATDLYGLGIVDRIVLEPVGGAHRDPKTAIDALKMALLQELAFLKPMDRDALRSMRRKKFLDIGG</sequence>
<evidence type="ECO:0000255" key="1">
    <source>
        <dbReference type="HAMAP-Rule" id="MF_00823"/>
    </source>
</evidence>
<evidence type="ECO:0000255" key="2">
    <source>
        <dbReference type="PROSITE-ProRule" id="PRU01137"/>
    </source>
</evidence>
<accession>Q5NPY2</accession>
<feature type="chain" id="PRO_0000223863" description="Acetyl-coenzyme A carboxylase carboxyl transferase subunit alpha">
    <location>
        <begin position="1"/>
        <end position="313"/>
    </location>
</feature>
<feature type="domain" description="CoA carboxyltransferase C-terminal" evidence="2">
    <location>
        <begin position="30"/>
        <end position="291"/>
    </location>
</feature>
<name>ACCA_ZYMMO</name>
<proteinExistence type="inferred from homology"/>
<gene>
    <name evidence="1" type="primary">accA</name>
    <name type="ordered locus">ZMO0599</name>
</gene>
<comment type="function">
    <text evidence="1">Component of the acetyl coenzyme A carboxylase (ACC) complex. First, biotin carboxylase catalyzes the carboxylation of biotin on its carrier protein (BCCP) and then the CO(2) group is transferred by the carboxyltransferase to acetyl-CoA to form malonyl-CoA.</text>
</comment>
<comment type="catalytic activity">
    <reaction evidence="1">
        <text>N(6)-carboxybiotinyl-L-lysyl-[protein] + acetyl-CoA = N(6)-biotinyl-L-lysyl-[protein] + malonyl-CoA</text>
        <dbReference type="Rhea" id="RHEA:54728"/>
        <dbReference type="Rhea" id="RHEA-COMP:10505"/>
        <dbReference type="Rhea" id="RHEA-COMP:10506"/>
        <dbReference type="ChEBI" id="CHEBI:57288"/>
        <dbReference type="ChEBI" id="CHEBI:57384"/>
        <dbReference type="ChEBI" id="CHEBI:83144"/>
        <dbReference type="ChEBI" id="CHEBI:83145"/>
        <dbReference type="EC" id="2.1.3.15"/>
    </reaction>
</comment>
<comment type="pathway">
    <text evidence="1">Lipid metabolism; malonyl-CoA biosynthesis; malonyl-CoA from acetyl-CoA: step 1/1.</text>
</comment>
<comment type="subunit">
    <text evidence="1">Acetyl-CoA carboxylase is a heterohexamer composed of biotin carboxyl carrier protein (AccB), biotin carboxylase (AccC) and two subunits each of ACCase subunit alpha (AccA) and ACCase subunit beta (AccD).</text>
</comment>
<comment type="subcellular location">
    <subcellularLocation>
        <location evidence="1">Cytoplasm</location>
    </subcellularLocation>
</comment>
<comment type="similarity">
    <text evidence="1">Belongs to the AccA family.</text>
</comment>
<keyword id="KW-0067">ATP-binding</keyword>
<keyword id="KW-0963">Cytoplasm</keyword>
<keyword id="KW-0275">Fatty acid biosynthesis</keyword>
<keyword id="KW-0276">Fatty acid metabolism</keyword>
<keyword id="KW-0444">Lipid biosynthesis</keyword>
<keyword id="KW-0443">Lipid metabolism</keyword>
<keyword id="KW-0547">Nucleotide-binding</keyword>
<keyword id="KW-1185">Reference proteome</keyword>
<keyword id="KW-0808">Transferase</keyword>
<organism>
    <name type="scientific">Zymomonas mobilis subsp. mobilis (strain ATCC 31821 / ZM4 / CP4)</name>
    <dbReference type="NCBI Taxonomy" id="264203"/>
    <lineage>
        <taxon>Bacteria</taxon>
        <taxon>Pseudomonadati</taxon>
        <taxon>Pseudomonadota</taxon>
        <taxon>Alphaproteobacteria</taxon>
        <taxon>Sphingomonadales</taxon>
        <taxon>Zymomonadaceae</taxon>
        <taxon>Zymomonas</taxon>
    </lineage>
</organism>